<dbReference type="EC" id="3.1.11.-"/>
<dbReference type="EMBL" id="AB010070">
    <property type="protein sequence ID" value="BAB11450.1"/>
    <property type="molecule type" value="Genomic_DNA"/>
</dbReference>
<dbReference type="EMBL" id="CP002688">
    <property type="protein sequence ID" value="AED91196.1"/>
    <property type="molecule type" value="Genomic_DNA"/>
</dbReference>
<dbReference type="RefSeq" id="NP_196388.1">
    <property type="nucleotide sequence ID" value="NM_120853.4"/>
</dbReference>
<dbReference type="SMR" id="Q9FLR0"/>
<dbReference type="FunCoup" id="Q9FLR0">
    <property type="interactions" value="663"/>
</dbReference>
<dbReference type="STRING" id="3702.Q9FLR0"/>
<dbReference type="PaxDb" id="3702-AT5G07710.1"/>
<dbReference type="ProteomicsDB" id="251187"/>
<dbReference type="EnsemblPlants" id="AT5G07710.1">
    <property type="protein sequence ID" value="AT5G07710.1"/>
    <property type="gene ID" value="AT5G07710"/>
</dbReference>
<dbReference type="GeneID" id="830664"/>
<dbReference type="Gramene" id="AT5G07710.1">
    <property type="protein sequence ID" value="AT5G07710.1"/>
    <property type="gene ID" value="AT5G07710"/>
</dbReference>
<dbReference type="KEGG" id="ath:AT5G07710"/>
<dbReference type="Araport" id="AT5G07710"/>
<dbReference type="TAIR" id="AT5G07710">
    <property type="gene designation" value="NEN1"/>
</dbReference>
<dbReference type="eggNOG" id="ENOG502QPPQ">
    <property type="taxonomic scope" value="Eukaryota"/>
</dbReference>
<dbReference type="HOGENOM" id="CLU_030072_0_0_1"/>
<dbReference type="InParanoid" id="Q9FLR0"/>
<dbReference type="OMA" id="QPDPFDM"/>
<dbReference type="PhylomeDB" id="Q9FLR0"/>
<dbReference type="PRO" id="PR:Q9FLR0"/>
<dbReference type="Proteomes" id="UP000006548">
    <property type="component" value="Chromosome 5"/>
</dbReference>
<dbReference type="ExpressionAtlas" id="Q9FLR0">
    <property type="expression patterns" value="baseline and differential"/>
</dbReference>
<dbReference type="GO" id="GO:0005737">
    <property type="term" value="C:cytoplasm"/>
    <property type="evidence" value="ECO:0007669"/>
    <property type="project" value="UniProtKB-SubCell"/>
</dbReference>
<dbReference type="GO" id="GO:0005634">
    <property type="term" value="C:nucleus"/>
    <property type="evidence" value="ECO:0007669"/>
    <property type="project" value="UniProtKB-SubCell"/>
</dbReference>
<dbReference type="GO" id="GO:0004527">
    <property type="term" value="F:exonuclease activity"/>
    <property type="evidence" value="ECO:0007669"/>
    <property type="project" value="UniProtKB-KW"/>
</dbReference>
<dbReference type="GO" id="GO:0046872">
    <property type="term" value="F:metal ion binding"/>
    <property type="evidence" value="ECO:0007669"/>
    <property type="project" value="UniProtKB-KW"/>
</dbReference>
<dbReference type="GO" id="GO:0003676">
    <property type="term" value="F:nucleic acid binding"/>
    <property type="evidence" value="ECO:0007669"/>
    <property type="project" value="InterPro"/>
</dbReference>
<dbReference type="CDD" id="cd06127">
    <property type="entry name" value="DEDDh"/>
    <property type="match status" value="1"/>
</dbReference>
<dbReference type="FunFam" id="3.30.420.10:FF:000040">
    <property type="entry name" value="Exonuclease family protein"/>
    <property type="match status" value="1"/>
</dbReference>
<dbReference type="Gene3D" id="3.30.420.10">
    <property type="entry name" value="Ribonuclease H-like superfamily/Ribonuclease H"/>
    <property type="match status" value="1"/>
</dbReference>
<dbReference type="InterPro" id="IPR013520">
    <property type="entry name" value="Exonuclease_RNaseT/DNA_pol3"/>
</dbReference>
<dbReference type="InterPro" id="IPR012337">
    <property type="entry name" value="RNaseH-like_sf"/>
</dbReference>
<dbReference type="InterPro" id="IPR036397">
    <property type="entry name" value="RNaseH_sf"/>
</dbReference>
<dbReference type="PANTHER" id="PTHR30231">
    <property type="entry name" value="DNA POLYMERASE III SUBUNIT EPSILON"/>
    <property type="match status" value="1"/>
</dbReference>
<dbReference type="PANTHER" id="PTHR30231:SF36">
    <property type="entry name" value="PROTEIN NEN1"/>
    <property type="match status" value="1"/>
</dbReference>
<dbReference type="Pfam" id="PF00929">
    <property type="entry name" value="RNase_T"/>
    <property type="match status" value="1"/>
</dbReference>
<dbReference type="SMART" id="SM00479">
    <property type="entry name" value="EXOIII"/>
    <property type="match status" value="1"/>
</dbReference>
<dbReference type="SUPFAM" id="SSF53098">
    <property type="entry name" value="Ribonuclease H-like"/>
    <property type="match status" value="1"/>
</dbReference>
<comment type="function">
    <text evidence="6">Probable exonuclease involved in enuclation of sieve elements.</text>
</comment>
<comment type="cofactor">
    <cofactor evidence="1">
        <name>Mg(2+)</name>
        <dbReference type="ChEBI" id="CHEBI:18420"/>
    </cofactor>
</comment>
<comment type="subcellular location">
    <subcellularLocation>
        <location evidence="4">Cytoplasm</location>
    </subcellularLocation>
    <subcellularLocation>
        <location evidence="4">Nucleus</location>
    </subcellularLocation>
    <text evidence="4">Moves from the cytoplasm to the nucleus during enuclation.</text>
</comment>
<comment type="tissue specificity">
    <text evidence="4">Expressed in the sieve elements and phloem pole pericycle cells.</text>
</comment>
<comment type="induction">
    <text evidence="4">Regulated by the transcription factors NAC045 and NAC086.</text>
</comment>
<evidence type="ECO:0000250" key="1">
    <source>
        <dbReference type="UniProtKB" id="Q682U6"/>
    </source>
</evidence>
<evidence type="ECO:0000250" key="2">
    <source>
        <dbReference type="UniProtKB" id="Q91XB0"/>
    </source>
</evidence>
<evidence type="ECO:0000255" key="3"/>
<evidence type="ECO:0000269" key="4">
    <source>
    </source>
</evidence>
<evidence type="ECO:0000303" key="5">
    <source>
    </source>
</evidence>
<evidence type="ECO:0000305" key="6">
    <source>
    </source>
</evidence>
<evidence type="ECO:0000312" key="7">
    <source>
        <dbReference type="Araport" id="AT5G07710"/>
    </source>
</evidence>
<evidence type="ECO:0000312" key="8">
    <source>
        <dbReference type="EMBL" id="BAB11450.1"/>
    </source>
</evidence>
<evidence type="ECO:0000312" key="9">
    <source>
        <dbReference type="Proteomes" id="UP000006548"/>
    </source>
</evidence>
<sequence>MDPEDRSEIAFFDVETTVPKRGQRFAILEFGSILVCPKKLTELRSYTTLVQPADLSLISSLSVRCNGIKRDDVVLAPLFADIADTVYDILHGRIWAGHNILRFDCARIREAFAEIGRQPPEPKGAIDSLGLLTQKFGRRAGDMKMATLARYFGLGNQTHRSLDDVRMNLEVLKYCATVLFLESSLPYAHVDNSVSPETISSRRRIDASREGNTVTTSVRLPSISENSAAQPDPFNMSVLRNEMASDNHIQSDILMEEEQIEPSDVVASENTSDHEGFLTPDAMSLSNIKAMLFPFYPGSQMMKLKLLHGDSPLQLYCSYLKIRFGVNGKFLDNTGRRRLNFVVDLNPSLYSILEACDSNAQKLSVDSGSTSEWNPVVNPMKGFVNYPNARIHIATEINGDEARYATEIHQRESSGATQKLIFSNPNNEELESLLTTGSVVDAFLSLEPYDYQQKAGIRLVAKKLVIQS</sequence>
<organism evidence="9">
    <name type="scientific">Arabidopsis thaliana</name>
    <name type="common">Mouse-ear cress</name>
    <dbReference type="NCBI Taxonomy" id="3702"/>
    <lineage>
        <taxon>Eukaryota</taxon>
        <taxon>Viridiplantae</taxon>
        <taxon>Streptophyta</taxon>
        <taxon>Embryophyta</taxon>
        <taxon>Tracheophyta</taxon>
        <taxon>Spermatophyta</taxon>
        <taxon>Magnoliopsida</taxon>
        <taxon>eudicotyledons</taxon>
        <taxon>Gunneridae</taxon>
        <taxon>Pentapetalae</taxon>
        <taxon>rosids</taxon>
        <taxon>malvids</taxon>
        <taxon>Brassicales</taxon>
        <taxon>Brassicaceae</taxon>
        <taxon>Camelineae</taxon>
        <taxon>Arabidopsis</taxon>
    </lineage>
</organism>
<name>NEN1_ARATH</name>
<keyword id="KW-0963">Cytoplasm</keyword>
<keyword id="KW-0269">Exonuclease</keyword>
<keyword id="KW-0378">Hydrolase</keyword>
<keyword id="KW-0460">Magnesium</keyword>
<keyword id="KW-0479">Metal-binding</keyword>
<keyword id="KW-0540">Nuclease</keyword>
<keyword id="KW-0539">Nucleus</keyword>
<keyword id="KW-1185">Reference proteome</keyword>
<reference key="1">
    <citation type="journal article" date="1998" name="DNA Res.">
        <title>Structural analysis of Arabidopsis thaliana chromosome 5. IV. Sequence features of the regions of 1,456,315 bp covered by nineteen physically assigned P1 and TAC clones.</title>
        <authorList>
            <person name="Sato S."/>
            <person name="Kaneko T."/>
            <person name="Kotani H."/>
            <person name="Nakamura Y."/>
            <person name="Asamizu E."/>
            <person name="Miyajima N."/>
            <person name="Tabata S."/>
        </authorList>
    </citation>
    <scope>NUCLEOTIDE SEQUENCE [LARGE SCALE GENOMIC DNA]</scope>
    <source>
        <strain>cv. Columbia</strain>
    </source>
</reference>
<reference key="2">
    <citation type="journal article" date="2017" name="Plant J.">
        <title>Araport11: a complete reannotation of the Arabidopsis thaliana reference genome.</title>
        <authorList>
            <person name="Cheng C.Y."/>
            <person name="Krishnakumar V."/>
            <person name="Chan A.P."/>
            <person name="Thibaud-Nissen F."/>
            <person name="Schobel S."/>
            <person name="Town C.D."/>
        </authorList>
    </citation>
    <scope>GENOME REANNOTATION</scope>
    <source>
        <strain>cv. Columbia</strain>
    </source>
</reference>
<reference key="3">
    <citation type="journal article" date="2014" name="Science">
        <title>Plant development. Arabidopsis NAC45/86 direct sieve element morphogenesis culminating in enucleation.</title>
        <authorList>
            <person name="Furuta K.M."/>
            <person name="Yadav S.R."/>
            <person name="Lehesranta S."/>
            <person name="Belevich I."/>
            <person name="Miyashima S."/>
            <person name="Heo J.O."/>
            <person name="Vaten A."/>
            <person name="Lindgren O."/>
            <person name="De Rybel B."/>
            <person name="Van Isterdael G."/>
            <person name="Somervuo P."/>
            <person name="Lichtenberger R."/>
            <person name="Rocha R."/>
            <person name="Thitamadee S."/>
            <person name="Taehtiharju S."/>
            <person name="Auvinen P."/>
            <person name="Beeckman T."/>
            <person name="Jokitalo E."/>
            <person name="Helariutta Y."/>
        </authorList>
    </citation>
    <scope>FUNCTION</scope>
    <scope>SUBCELLULAR LOCATION</scope>
    <scope>TISSUE SPECIFICITY</scope>
    <scope>INDUCTION BY NAC045 AND NAC086</scope>
</reference>
<protein>
    <recommendedName>
        <fullName evidence="5">Protein NEN1</fullName>
    </recommendedName>
    <alternativeName>
        <fullName evidence="5">NAC45/NAC86-dependent exonuclease-domain protein 1</fullName>
        <ecNumber>3.1.11.-</ecNumber>
    </alternativeName>
</protein>
<accession>Q9FLR0</accession>
<feature type="chain" id="PRO_0000430888" description="Protein NEN1">
    <location>
        <begin position="1"/>
        <end position="468"/>
    </location>
</feature>
<feature type="domain" description="Exonuclease" evidence="3">
    <location>
        <begin position="11"/>
        <end position="172"/>
    </location>
</feature>
<feature type="active site" description="Proton donor/acceptor" evidence="2">
    <location>
        <position position="159"/>
    </location>
</feature>
<feature type="binding site" evidence="2">
    <location>
        <position position="13"/>
    </location>
    <ligand>
        <name>Mg(2+)</name>
        <dbReference type="ChEBI" id="CHEBI:18420"/>
        <label>1</label>
    </ligand>
</feature>
<feature type="binding site" evidence="2">
    <location>
        <position position="13"/>
    </location>
    <ligand>
        <name>Mg(2+)</name>
        <dbReference type="ChEBI" id="CHEBI:18420"/>
        <label>2</label>
    </ligand>
</feature>
<feature type="binding site" evidence="2">
    <location>
        <position position="15"/>
    </location>
    <ligand>
        <name>Mg(2+)</name>
        <dbReference type="ChEBI" id="CHEBI:18420"/>
        <label>1</label>
    </ligand>
</feature>
<feature type="binding site" evidence="2">
    <location>
        <position position="164"/>
    </location>
    <ligand>
        <name>Mg(2+)</name>
        <dbReference type="ChEBI" id="CHEBI:18420"/>
        <label>1</label>
    </ligand>
</feature>
<proteinExistence type="evidence at transcript level"/>
<gene>
    <name evidence="5" type="primary">NEN1</name>
    <name evidence="7" type="ordered locus">At5g07710</name>
    <name evidence="8" type="ORF">MBK20.17</name>
</gene>